<name>FRA17_FRAAN</name>
<protein>
    <recommendedName>
        <fullName evidence="4">Major strawberry allergen Fra a 1.07</fullName>
    </recommendedName>
    <alternativeName>
        <fullName evidence="4">Class 10 plant pathogenesis-related protein Fra a 1.07</fullName>
        <shortName evidence="4">PR10-related protein Fra a 1.07</shortName>
        <ecNumber evidence="2">3.1.27.-</ecNumber>
    </alternativeName>
    <allergenName evidence="4">Fra a 1</allergenName>
</protein>
<gene>
    <name evidence="3" type="primary">Fra a 1.07</name>
</gene>
<organism>
    <name type="scientific">Fragaria ananassa</name>
    <name type="common">Strawberry</name>
    <name type="synonym">Fragaria chiloensis x Fragaria virginiana</name>
    <dbReference type="NCBI Taxonomy" id="3747"/>
    <lineage>
        <taxon>Eukaryota</taxon>
        <taxon>Viridiplantae</taxon>
        <taxon>Streptophyta</taxon>
        <taxon>Embryophyta</taxon>
        <taxon>Tracheophyta</taxon>
        <taxon>Spermatophyta</taxon>
        <taxon>Magnoliopsida</taxon>
        <taxon>eudicotyledons</taxon>
        <taxon>Gunneridae</taxon>
        <taxon>Pentapetalae</taxon>
        <taxon>rosids</taxon>
        <taxon>fabids</taxon>
        <taxon>Rosales</taxon>
        <taxon>Rosaceae</taxon>
        <taxon>Rosoideae</taxon>
        <taxon>Potentilleae</taxon>
        <taxon>Fragariinae</taxon>
        <taxon>Fragaria</taxon>
    </lineage>
</organism>
<feature type="chain" id="PRO_0000447018" description="Major strawberry allergen Fra a 1.07">
    <location>
        <begin position="1"/>
        <end position="160"/>
    </location>
</feature>
<keyword id="KW-0020">Allergen</keyword>
<keyword id="KW-0378">Hydrolase</keyword>
<keyword id="KW-0540">Nuclease</keyword>
<keyword id="KW-0568">Pathogenesis-related protein</keyword>
<keyword id="KW-0597">Phosphoprotein</keyword>
<keyword id="KW-0611">Plant defense</keyword>
<sequence length="160" mass="17611">MGVFTYETEFTSVIPPPRLYKAFVLDTDNLIPKIAPQAVKSTELVQGDGGVGTIKKIHLGEGSEYSYVKHQIDGLDKDNFVYNYSIIEGDAIGDKVEKISYEIKLVASPSGGSIIKSTSHYHCKGEVEIKEEHVKAGKERAAGLFKIIENYLLGNPDAYN</sequence>
<dbReference type="EC" id="3.1.27.-" evidence="2"/>
<dbReference type="EMBL" id="KJ507738">
    <property type="protein sequence ID" value="AHZ10958.1"/>
    <property type="molecule type" value="mRNA"/>
</dbReference>
<dbReference type="SMR" id="A0A024B4E4"/>
<dbReference type="GO" id="GO:0005737">
    <property type="term" value="C:cytoplasm"/>
    <property type="evidence" value="ECO:0007669"/>
    <property type="project" value="TreeGrafter"/>
</dbReference>
<dbReference type="GO" id="GO:0005634">
    <property type="term" value="C:nucleus"/>
    <property type="evidence" value="ECO:0007669"/>
    <property type="project" value="TreeGrafter"/>
</dbReference>
<dbReference type="GO" id="GO:0010427">
    <property type="term" value="F:abscisic acid binding"/>
    <property type="evidence" value="ECO:0007669"/>
    <property type="project" value="InterPro"/>
</dbReference>
<dbReference type="GO" id="GO:0004518">
    <property type="term" value="F:nuclease activity"/>
    <property type="evidence" value="ECO:0007669"/>
    <property type="project" value="UniProtKB-KW"/>
</dbReference>
<dbReference type="GO" id="GO:0004864">
    <property type="term" value="F:protein phosphatase inhibitor activity"/>
    <property type="evidence" value="ECO:0007669"/>
    <property type="project" value="InterPro"/>
</dbReference>
<dbReference type="GO" id="GO:0038023">
    <property type="term" value="F:signaling receptor activity"/>
    <property type="evidence" value="ECO:0007669"/>
    <property type="project" value="InterPro"/>
</dbReference>
<dbReference type="GO" id="GO:0009738">
    <property type="term" value="P:abscisic acid-activated signaling pathway"/>
    <property type="evidence" value="ECO:0007669"/>
    <property type="project" value="InterPro"/>
</dbReference>
<dbReference type="GO" id="GO:0006952">
    <property type="term" value="P:defense response"/>
    <property type="evidence" value="ECO:0007669"/>
    <property type="project" value="UniProtKB-KW"/>
</dbReference>
<dbReference type="CDD" id="cd07816">
    <property type="entry name" value="Bet_v1-like"/>
    <property type="match status" value="1"/>
</dbReference>
<dbReference type="FunFam" id="3.30.530.20:FF:000007">
    <property type="entry name" value="Major pollen allergen Bet v 1-A"/>
    <property type="match status" value="1"/>
</dbReference>
<dbReference type="Gene3D" id="3.30.530.20">
    <property type="match status" value="1"/>
</dbReference>
<dbReference type="InterPro" id="IPR000916">
    <property type="entry name" value="Bet_v_I/MLP"/>
</dbReference>
<dbReference type="InterPro" id="IPR024949">
    <property type="entry name" value="Bet_v_I_allergen"/>
</dbReference>
<dbReference type="InterPro" id="IPR050279">
    <property type="entry name" value="Plant_def-hormone_signal"/>
</dbReference>
<dbReference type="InterPro" id="IPR023393">
    <property type="entry name" value="START-like_dom_sf"/>
</dbReference>
<dbReference type="PANTHER" id="PTHR31213">
    <property type="entry name" value="OS08G0374000 PROTEIN-RELATED"/>
    <property type="match status" value="1"/>
</dbReference>
<dbReference type="PANTHER" id="PTHR31213:SF55">
    <property type="entry name" value="STRESS-INDUCED PROTEIN SAM22"/>
    <property type="match status" value="1"/>
</dbReference>
<dbReference type="Pfam" id="PF00407">
    <property type="entry name" value="Bet_v_1"/>
    <property type="match status" value="1"/>
</dbReference>
<dbReference type="PRINTS" id="PR00634">
    <property type="entry name" value="BETALLERGEN"/>
</dbReference>
<dbReference type="SUPFAM" id="SSF55961">
    <property type="entry name" value="Bet v1-like"/>
    <property type="match status" value="1"/>
</dbReference>
<dbReference type="PROSITE" id="PS00451">
    <property type="entry name" value="PATHOGENESIS_BETVI"/>
    <property type="match status" value="1"/>
</dbReference>
<proteinExistence type="evidence at protein level"/>
<reference key="1">
    <citation type="journal article" date="2016" name="J. Agric. Food Chem.">
        <title>Fra a 1.02 is the most potent isoform of the Bet v 1-like allergen in strawberry fruit.</title>
        <authorList>
            <person name="Franz-Oberdorf K."/>
            <person name="Eberlein B."/>
            <person name="Edelmann K."/>
            <person name="Huecherig S."/>
            <person name="Besbes F."/>
            <person name="Darsow U."/>
            <person name="Ring J."/>
            <person name="Schwab W."/>
        </authorList>
    </citation>
    <scope>NUCLEOTIDE SEQUENCE [MRNA]</scope>
    <scope>ALLERGEN</scope>
</reference>
<reference key="2">
    <citation type="journal article" date="2019" name="J. Plant Physiol.">
        <title>Phosphorylation-dependent ribonuclease activity of Fra a 1 proteins.</title>
        <authorList>
            <person name="Besbes F."/>
            <person name="Franz-Oberdorf K."/>
            <person name="Schwab W."/>
        </authorList>
    </citation>
    <scope>FUNCTION</scope>
    <scope>TISSUE SPECIFICITY</scope>
    <scope>PHOSPHORYLATION</scope>
</reference>
<evidence type="ECO:0000269" key="1">
    <source>
    </source>
</evidence>
<evidence type="ECO:0000269" key="2">
    <source>
    </source>
</evidence>
<evidence type="ECO:0000303" key="3">
    <source>
    </source>
</evidence>
<evidence type="ECO:0000305" key="4"/>
<accession>A0A024B4E4</accession>
<comment type="function">
    <text evidence="2">Possesses ribonuclease activity in vitro.</text>
</comment>
<comment type="tissue specificity">
    <text evidence="2">Highly expressed in roots (PubMed:30572279). Expressed a low levels in ripe red fruits (PubMed:30572279).</text>
</comment>
<comment type="PTM">
    <text evidence="2">Phosphorylated in vivo. Phosphorylation prevents its activity as ribonuclease.</text>
</comment>
<comment type="allergen">
    <text evidence="1">May cause an allergic reaction in human (PubMed:27086707). Binds to IgE of patients allergic to birch Bet v 1 (PubMed:27086707). Causes degranulation of basophils sensitized with IgE of patients allergic to birch Bet v 1 (PubMed:27086707).</text>
</comment>
<comment type="similarity">
    <text evidence="4">Belongs to the BetVI family.</text>
</comment>